<comment type="similarity">
    <text evidence="2">Belongs to the DEFL family.</text>
</comment>
<comment type="caution">
    <text evidence="2">Was initially thought (Ref.1) to be a thionin.</text>
</comment>
<evidence type="ECO:0000250" key="1"/>
<evidence type="ECO:0000305" key="2"/>
<protein>
    <recommendedName>
        <fullName>Defensin-like protein 2</fullName>
    </recommendedName>
    <alternativeName>
        <fullName>Gamma-zeathionin-2</fullName>
    </alternativeName>
</protein>
<accession>P81009</accession>
<proteinExistence type="evidence at protein level"/>
<keyword id="KW-0929">Antimicrobial</keyword>
<keyword id="KW-0903">Direct protein sequencing</keyword>
<keyword id="KW-1015">Disulfide bond</keyword>
<keyword id="KW-0295">Fungicide</keyword>
<keyword id="KW-0611">Plant defense</keyword>
<keyword id="KW-1185">Reference proteome</keyword>
<dbReference type="PIR" id="B58319">
    <property type="entry name" value="B58319"/>
</dbReference>
<dbReference type="SMR" id="P81009"/>
<dbReference type="MaizeGDB" id="139775"/>
<dbReference type="InParanoid" id="P81009"/>
<dbReference type="Proteomes" id="UP000007305">
    <property type="component" value="Unplaced"/>
</dbReference>
<dbReference type="ExpressionAtlas" id="P81009">
    <property type="expression patterns" value="differential"/>
</dbReference>
<dbReference type="GO" id="GO:0006952">
    <property type="term" value="P:defense response"/>
    <property type="evidence" value="ECO:0000318"/>
    <property type="project" value="GO_Central"/>
</dbReference>
<dbReference type="GO" id="GO:0050832">
    <property type="term" value="P:defense response to fungus"/>
    <property type="evidence" value="ECO:0007669"/>
    <property type="project" value="UniProtKB-KW"/>
</dbReference>
<dbReference type="GO" id="GO:0031640">
    <property type="term" value="P:killing of cells of another organism"/>
    <property type="evidence" value="ECO:0007669"/>
    <property type="project" value="UniProtKB-KW"/>
</dbReference>
<dbReference type="Gene3D" id="3.30.30.10">
    <property type="entry name" value="Knottin, scorpion toxin-like"/>
    <property type="match status" value="1"/>
</dbReference>
<dbReference type="InterPro" id="IPR008176">
    <property type="entry name" value="Defensin_plant"/>
</dbReference>
<dbReference type="InterPro" id="IPR003614">
    <property type="entry name" value="Scorpion_toxin-like"/>
</dbReference>
<dbReference type="InterPro" id="IPR036574">
    <property type="entry name" value="Scorpion_toxin-like_sf"/>
</dbReference>
<dbReference type="Pfam" id="PF00304">
    <property type="entry name" value="Gamma-thionin"/>
    <property type="match status" value="1"/>
</dbReference>
<dbReference type="SMART" id="SM00505">
    <property type="entry name" value="Knot1"/>
    <property type="match status" value="1"/>
</dbReference>
<dbReference type="SUPFAM" id="SSF57095">
    <property type="entry name" value="Scorpion toxin-like"/>
    <property type="match status" value="1"/>
</dbReference>
<dbReference type="PROSITE" id="PS00940">
    <property type="entry name" value="GAMMA_THIONIN"/>
    <property type="match status" value="1"/>
</dbReference>
<feature type="chain" id="PRO_0000074241" description="Defensin-like protein 2">
    <location>
        <begin position="1"/>
        <end position="47"/>
    </location>
</feature>
<feature type="disulfide bond" evidence="1">
    <location>
        <begin position="3"/>
        <end position="47"/>
    </location>
</feature>
<feature type="disulfide bond" evidence="1">
    <location>
        <begin position="14"/>
        <end position="36"/>
    </location>
</feature>
<feature type="disulfide bond" evidence="1">
    <location>
        <begin position="20"/>
        <end position="41"/>
    </location>
</feature>
<feature type="disulfide bond" evidence="1">
    <location>
        <begin position="24"/>
        <end position="43"/>
    </location>
</feature>
<reference key="1">
    <citation type="journal article" date="1996" name="Protein Pept. Lett.">
        <title>Complete amino acid sequences of two gamma-thionins from maize (Zea mays L.) seeds.</title>
        <authorList>
            <person name="Castro M.S."/>
            <person name="Fontes W."/>
            <person name="Morhy L."/>
            <person name="Bloch C. Jr."/>
        </authorList>
    </citation>
    <scope>PROTEIN SEQUENCE</scope>
    <source>
        <tissue>Seed</tissue>
    </source>
</reference>
<organism>
    <name type="scientific">Zea mays</name>
    <name type="common">Maize</name>
    <dbReference type="NCBI Taxonomy" id="4577"/>
    <lineage>
        <taxon>Eukaryota</taxon>
        <taxon>Viridiplantae</taxon>
        <taxon>Streptophyta</taxon>
        <taxon>Embryophyta</taxon>
        <taxon>Tracheophyta</taxon>
        <taxon>Spermatophyta</taxon>
        <taxon>Magnoliopsida</taxon>
        <taxon>Liliopsida</taxon>
        <taxon>Poales</taxon>
        <taxon>Poaceae</taxon>
        <taxon>PACMAD clade</taxon>
        <taxon>Panicoideae</taxon>
        <taxon>Andropogonodae</taxon>
        <taxon>Andropogoneae</taxon>
        <taxon>Tripsacinae</taxon>
        <taxon>Zea</taxon>
    </lineage>
</organism>
<sequence length="47" mass="5368">RVCMGKSQHHSFPCISDRLCSNECVKEDGGWTAGYCHLRYCRCQKAC</sequence>
<name>DEF2_MAIZE</name>